<dbReference type="EMBL" id="Z11794">
    <property type="protein sequence ID" value="CAA77837.1"/>
    <property type="molecule type" value="Genomic_DNA"/>
</dbReference>
<dbReference type="EMBL" id="Z11795">
    <property type="protein sequence ID" value="CAA77838.1"/>
    <property type="status" value="ALT_SEQ"/>
    <property type="molecule type" value="mRNA"/>
</dbReference>
<dbReference type="EMBL" id="FO080909">
    <property type="protein sequence ID" value="CCD67721.1"/>
    <property type="molecule type" value="Genomic_DNA"/>
</dbReference>
<dbReference type="EMBL" id="FO080909">
    <property type="protein sequence ID" value="CCD67722.1"/>
    <property type="molecule type" value="Genomic_DNA"/>
</dbReference>
<dbReference type="PIR" id="S26301">
    <property type="entry name" value="S26301"/>
</dbReference>
<dbReference type="PIR" id="T16113">
    <property type="entry name" value="T16113"/>
</dbReference>
<dbReference type="RefSeq" id="NP_001023141.1">
    <molecule id="P26797-2"/>
    <property type="nucleotide sequence ID" value="NM_001027970.4"/>
</dbReference>
<dbReference type="RefSeq" id="NP_001023142.1">
    <molecule id="P26797-1"/>
    <property type="nucleotide sequence ID" value="NM_001027971.6"/>
</dbReference>
<dbReference type="SMR" id="P26797"/>
<dbReference type="BioGRID" id="42704">
    <property type="interactions" value="2"/>
</dbReference>
<dbReference type="IntAct" id="P26797">
    <property type="interactions" value="2"/>
</dbReference>
<dbReference type="STRING" id="6239.F20D12.6b.1"/>
<dbReference type="PaxDb" id="6239-F20D12.6b"/>
<dbReference type="EnsemblMetazoa" id="F20D12.6a.1">
    <molecule id="P26797-2"/>
    <property type="protein sequence ID" value="F20D12.6a.1"/>
    <property type="gene ID" value="WBGene00000442"/>
</dbReference>
<dbReference type="EnsemblMetazoa" id="F20D12.6b.1">
    <molecule id="P26797-1"/>
    <property type="protein sequence ID" value="F20D12.6b.1"/>
    <property type="gene ID" value="WBGene00000442"/>
</dbReference>
<dbReference type="GeneID" id="177590"/>
<dbReference type="KEGG" id="cel:CELE_F20D12.6"/>
<dbReference type="UCSC" id="F20D12.6a">
    <molecule id="P26797-1"/>
    <property type="organism name" value="c. elegans"/>
</dbReference>
<dbReference type="AGR" id="WB:WBGene00000442"/>
<dbReference type="CTD" id="177590"/>
<dbReference type="WormBase" id="F20D12.6a">
    <molecule id="P26797-2"/>
    <property type="protein sequence ID" value="CE31687"/>
    <property type="gene ID" value="WBGene00000442"/>
    <property type="gene designation" value="ceh-19"/>
</dbReference>
<dbReference type="WormBase" id="F20D12.6b">
    <molecule id="P26797-1"/>
    <property type="protein sequence ID" value="CE04436"/>
    <property type="gene ID" value="WBGene00000442"/>
    <property type="gene designation" value="ceh-19"/>
</dbReference>
<dbReference type="eggNOG" id="KOG0488">
    <property type="taxonomic scope" value="Eukaryota"/>
</dbReference>
<dbReference type="GeneTree" id="ENSGT00940000170984"/>
<dbReference type="HOGENOM" id="CLU_118743_0_0_1"/>
<dbReference type="InParanoid" id="P26797"/>
<dbReference type="OMA" id="IRQMCKE"/>
<dbReference type="OrthoDB" id="6159439at2759"/>
<dbReference type="PhylomeDB" id="P26797"/>
<dbReference type="SignaLink" id="P26797"/>
<dbReference type="PRO" id="PR:P26797"/>
<dbReference type="Proteomes" id="UP000001940">
    <property type="component" value="Chromosome IV"/>
</dbReference>
<dbReference type="Bgee" id="WBGene00000442">
    <property type="expression patterns" value="Expressed in larva and 3 other cell types or tissues"/>
</dbReference>
<dbReference type="GO" id="GO:0005634">
    <property type="term" value="C:nucleus"/>
    <property type="evidence" value="ECO:0000314"/>
    <property type="project" value="UniProtKB"/>
</dbReference>
<dbReference type="GO" id="GO:0003677">
    <property type="term" value="F:DNA binding"/>
    <property type="evidence" value="ECO:0007669"/>
    <property type="project" value="UniProtKB-KW"/>
</dbReference>
<dbReference type="GO" id="GO:0000981">
    <property type="term" value="F:DNA-binding transcription factor activity, RNA polymerase II-specific"/>
    <property type="evidence" value="ECO:0007669"/>
    <property type="project" value="InterPro"/>
</dbReference>
<dbReference type="GO" id="GO:0010628">
    <property type="term" value="P:positive regulation of gene expression"/>
    <property type="evidence" value="ECO:0000315"/>
    <property type="project" value="UniProtKB"/>
</dbReference>
<dbReference type="CDD" id="cd00086">
    <property type="entry name" value="homeodomain"/>
    <property type="match status" value="1"/>
</dbReference>
<dbReference type="Gene3D" id="1.10.10.60">
    <property type="entry name" value="Homeodomain-like"/>
    <property type="match status" value="1"/>
</dbReference>
<dbReference type="InterPro" id="IPR001356">
    <property type="entry name" value="HD"/>
</dbReference>
<dbReference type="InterPro" id="IPR020479">
    <property type="entry name" value="HD_metazoa"/>
</dbReference>
<dbReference type="InterPro" id="IPR017970">
    <property type="entry name" value="Homeobox_CS"/>
</dbReference>
<dbReference type="InterPro" id="IPR050848">
    <property type="entry name" value="Homeobox_TF"/>
</dbReference>
<dbReference type="InterPro" id="IPR009057">
    <property type="entry name" value="Homeodomain-like_sf"/>
</dbReference>
<dbReference type="PANTHER" id="PTHR24333">
    <property type="entry name" value="HOMEO BOX HB9 LIKE A-RELATED"/>
    <property type="match status" value="1"/>
</dbReference>
<dbReference type="PANTHER" id="PTHR24333:SF9">
    <property type="entry name" value="HOMEOBOX DOMAIN-CONTAINING PROTEIN"/>
    <property type="match status" value="1"/>
</dbReference>
<dbReference type="Pfam" id="PF00046">
    <property type="entry name" value="Homeodomain"/>
    <property type="match status" value="1"/>
</dbReference>
<dbReference type="PRINTS" id="PR00024">
    <property type="entry name" value="HOMEOBOX"/>
</dbReference>
<dbReference type="SMART" id="SM00389">
    <property type="entry name" value="HOX"/>
    <property type="match status" value="1"/>
</dbReference>
<dbReference type="SUPFAM" id="SSF46689">
    <property type="entry name" value="Homeodomain-like"/>
    <property type="match status" value="1"/>
</dbReference>
<dbReference type="PROSITE" id="PS00027">
    <property type="entry name" value="HOMEOBOX_1"/>
    <property type="match status" value="1"/>
</dbReference>
<dbReference type="PROSITE" id="PS50071">
    <property type="entry name" value="HOMEOBOX_2"/>
    <property type="match status" value="1"/>
</dbReference>
<proteinExistence type="evidence at transcript level"/>
<evidence type="ECO:0000255" key="1">
    <source>
        <dbReference type="PROSITE-ProRule" id="PRU00108"/>
    </source>
</evidence>
<evidence type="ECO:0000256" key="2">
    <source>
        <dbReference type="SAM" id="MobiDB-lite"/>
    </source>
</evidence>
<evidence type="ECO:0000269" key="3">
    <source>
    </source>
</evidence>
<evidence type="ECO:0000303" key="4">
    <source>
    </source>
</evidence>
<evidence type="ECO:0000303" key="5">
    <source>
    </source>
</evidence>
<evidence type="ECO:0000305" key="6"/>
<accession>P26797</accession>
<accession>Q19644</accession>
<name>HM19_CAEEL</name>
<feature type="chain" id="PRO_0000048990" description="Homeobox protein ceh-19">
    <location>
        <begin position="1"/>
        <end position="199"/>
    </location>
</feature>
<feature type="DNA-binding region" description="Homeobox" evidence="1">
    <location>
        <begin position="94"/>
        <end position="153"/>
    </location>
</feature>
<feature type="region of interest" description="Disordered" evidence="2">
    <location>
        <begin position="1"/>
        <end position="42"/>
    </location>
</feature>
<feature type="compositionally biased region" description="Acidic residues" evidence="2">
    <location>
        <begin position="18"/>
        <end position="40"/>
    </location>
</feature>
<feature type="splice variant" id="VSP_011803" description="In isoform a." evidence="4">
    <location>
        <begin position="1"/>
        <end position="77"/>
    </location>
</feature>
<feature type="splice variant" id="VSP_011804" description="In isoform a." evidence="4">
    <original>VSA</original>
    <variation>MYS</variation>
    <location>
        <begin position="78"/>
        <end position="80"/>
    </location>
</feature>
<keyword id="KW-0025">Alternative splicing</keyword>
<keyword id="KW-0217">Developmental protein</keyword>
<keyword id="KW-0238">DNA-binding</keyword>
<keyword id="KW-0371">Homeobox</keyword>
<keyword id="KW-0539">Nucleus</keyword>
<keyword id="KW-1185">Reference proteome</keyword>
<reference key="1">
    <citation type="journal article" date="1992" name="Nucleic Acids Res.">
        <title>Identification of a homeobox-containing gene located between lin-45 and unc-24 on chromosome IV in the nematode Caenorhabditis elegans.</title>
        <authorList>
            <person name="Naito M."/>
            <person name="Kohara Y."/>
            <person name="Kurosawa Y."/>
        </authorList>
    </citation>
    <scope>NUCLEOTIDE SEQUENCE [GENOMIC DNA / MRNA] (ISOFORM A)</scope>
</reference>
<reference key="2">
    <citation type="journal article" date="1998" name="Science">
        <title>Genome sequence of the nematode C. elegans: a platform for investigating biology.</title>
        <authorList>
            <consortium name="The C. elegans sequencing consortium"/>
        </authorList>
    </citation>
    <scope>NUCLEOTIDE SEQUENCE [LARGE SCALE GENOMIC DNA]</scope>
    <scope>ALTERNATIVE SPLICING</scope>
    <source>
        <strain>Bristol N2</strain>
    </source>
</reference>
<reference key="3">
    <citation type="journal article" date="2013" name="Genesis">
        <title>The Caenorhabditis elegans homeobox gene ceh-19 is required for MC motorneuron function.</title>
        <authorList>
            <person name="Feng H."/>
            <person name="Hope I.A."/>
        </authorList>
    </citation>
    <scope>FUNCTION</scope>
    <scope>SUBCELLULAR LOCATION</scope>
    <scope>DEVELOPMENTAL STAGE</scope>
</reference>
<gene>
    <name type="primary">ceh-19</name>
    <name type="synonym">ceh16</name>
    <name type="ORF">F20D12.6</name>
</gene>
<protein>
    <recommendedName>
        <fullName>Homeobox protein ceh-19</fullName>
    </recommendedName>
</protein>
<sequence length="199" mass="22890">MAFNIESLLEKKSNPVEEGNDFEEENDSEKNGEEDEEEEEKNVIDGWTNMATSQLAMFAIANDLRTPTLVELQMLLGVSARKHDYKRSRKSVCERKPRQAYSARQLDRLETEFQTDKYLSVNKRIQLSQTLNLTETQIKTWFQNRRTKWKKQLTSSIRQMVKDAPTSTSVGVPFQSLLTPPTPPTTLACHVNSLFACEQ</sequence>
<comment type="function">
    <text evidence="3 5">Probable transcription factor (PubMed:23315936). Required for MC motor neuron differentiation and function, including role in modulating pharyngeal pumping (PubMed:23315936). Regulates gene expression of FMRFamide-like neuropeptide flp-2 in MC motor neurons (PubMed:23315936). May act downstream of transcription factor pha-4 (PubMed:23315936).</text>
</comment>
<comment type="subcellular location">
    <subcellularLocation>
        <location evidence="3">Nucleus</location>
    </subcellularLocation>
</comment>
<comment type="alternative products">
    <event type="alternative splicing"/>
    <isoform>
        <id>P26797-1</id>
        <name>b</name>
        <sequence type="displayed"/>
    </isoform>
    <isoform>
        <id>P26797-2</id>
        <name>a</name>
        <sequence type="described" ref="VSP_011803 VSP_011804"/>
    </isoform>
</comment>
<comment type="developmental stage">
    <text evidence="3">Expressed in three pairs of neurons, the pharyngeal pace-maker neurons MC, the amphid neurons ADF and the phasmid neurons PHA, from 3-fold embryos until the adult stage (PubMed:23315936). Expression in ADFL/R was very low through the normal life cycle but increased greatly in the dauer larval stage (PubMed:23315936).</text>
</comment>
<comment type="sequence caution" evidence="6">
    <conflict type="miscellaneous discrepancy">
        <sequence resource="EMBL-CDS" id="CAA77838"/>
    </conflict>
    <text>Intron retention.</text>
</comment>
<organism>
    <name type="scientific">Caenorhabditis elegans</name>
    <dbReference type="NCBI Taxonomy" id="6239"/>
    <lineage>
        <taxon>Eukaryota</taxon>
        <taxon>Metazoa</taxon>
        <taxon>Ecdysozoa</taxon>
        <taxon>Nematoda</taxon>
        <taxon>Chromadorea</taxon>
        <taxon>Rhabditida</taxon>
        <taxon>Rhabditina</taxon>
        <taxon>Rhabditomorpha</taxon>
        <taxon>Rhabditoidea</taxon>
        <taxon>Rhabditidae</taxon>
        <taxon>Peloderinae</taxon>
        <taxon>Caenorhabditis</taxon>
    </lineage>
</organism>